<sequence length="453" mass="47640">MLQLKDKQVLVLGLGDTGLSALRWLARQGARLSVADSRALPPGLDAVRQEFPGMAIHLGPFTAAAFKEAELIVASPGVPVAEPQVQAAIERGVPVVGDVELFAQARSAHAKVIAITGANGKSTVTTLVGEICKAAGFKTVVAGNIGLPVLDVINDAVDVYVLELSSFQLETTYSLAADAATVLNISADHMDRYADMQAYANAKARIFTRAGLQVLNADDAWSRGMAAEGVAQLTFGLDAPRSAQDFGLLHDAGEAWLARGQRKLMPVADLNITGLHNAANALAALALCTVLDIDEVVALQALRDFKGLPHRVQWVADIDGVSFYDDSKGTNVGATVAALHGLNRKLVLIAGGDGKGQDFAALRAPVAKHARAVVLIGRDAGVIADALQESGVLLEYGDTLEEAVVKAFNLADRGDAVLLSPACASLDMFRNYVHRAEVFVKAVTDLQKKEVSA</sequence>
<proteinExistence type="inferred from homology"/>
<evidence type="ECO:0000255" key="1">
    <source>
        <dbReference type="HAMAP-Rule" id="MF_00639"/>
    </source>
</evidence>
<accession>Q1GYZ9</accession>
<organism>
    <name type="scientific">Methylobacillus flagellatus (strain ATCC 51484 / DSM 6875 / VKM B-1610 / KT)</name>
    <dbReference type="NCBI Taxonomy" id="265072"/>
    <lineage>
        <taxon>Bacteria</taxon>
        <taxon>Pseudomonadati</taxon>
        <taxon>Pseudomonadota</taxon>
        <taxon>Betaproteobacteria</taxon>
        <taxon>Nitrosomonadales</taxon>
        <taxon>Methylophilaceae</taxon>
        <taxon>Methylobacillus</taxon>
    </lineage>
</organism>
<gene>
    <name evidence="1" type="primary">murD</name>
    <name type="ordered locus">Mfla_2271</name>
</gene>
<reference key="1">
    <citation type="submission" date="2006-03" db="EMBL/GenBank/DDBJ databases">
        <title>Complete sequence of Methylobacillus flagellatus KT.</title>
        <authorList>
            <consortium name="US DOE Joint Genome Institute"/>
            <person name="Copeland A."/>
            <person name="Lucas S."/>
            <person name="Lapidus A."/>
            <person name="Barry K."/>
            <person name="Detter J.C."/>
            <person name="Glavina del Rio T."/>
            <person name="Hammon N."/>
            <person name="Israni S."/>
            <person name="Dalin E."/>
            <person name="Tice H."/>
            <person name="Pitluck S."/>
            <person name="Brettin T."/>
            <person name="Bruce D."/>
            <person name="Han C."/>
            <person name="Tapia R."/>
            <person name="Saunders E."/>
            <person name="Gilna P."/>
            <person name="Schmutz J."/>
            <person name="Larimer F."/>
            <person name="Land M."/>
            <person name="Kyrpides N."/>
            <person name="Anderson I."/>
            <person name="Richardson P."/>
        </authorList>
    </citation>
    <scope>NUCLEOTIDE SEQUENCE [LARGE SCALE GENOMIC DNA]</scope>
    <source>
        <strain>ATCC 51484 / DSM 6875 / VKM B-1610 / KT</strain>
    </source>
</reference>
<dbReference type="EC" id="6.3.2.9" evidence="1"/>
<dbReference type="EMBL" id="CP000284">
    <property type="protein sequence ID" value="ABE50538.1"/>
    <property type="molecule type" value="Genomic_DNA"/>
</dbReference>
<dbReference type="RefSeq" id="WP_011480492.1">
    <property type="nucleotide sequence ID" value="NC_007947.1"/>
</dbReference>
<dbReference type="SMR" id="Q1GYZ9"/>
<dbReference type="STRING" id="265072.Mfla_2271"/>
<dbReference type="KEGG" id="mfa:Mfla_2271"/>
<dbReference type="eggNOG" id="COG0771">
    <property type="taxonomic scope" value="Bacteria"/>
</dbReference>
<dbReference type="HOGENOM" id="CLU_032540_1_0_4"/>
<dbReference type="OrthoDB" id="9809796at2"/>
<dbReference type="UniPathway" id="UPA00219"/>
<dbReference type="Proteomes" id="UP000002440">
    <property type="component" value="Chromosome"/>
</dbReference>
<dbReference type="GO" id="GO:0005737">
    <property type="term" value="C:cytoplasm"/>
    <property type="evidence" value="ECO:0007669"/>
    <property type="project" value="UniProtKB-SubCell"/>
</dbReference>
<dbReference type="GO" id="GO:0005524">
    <property type="term" value="F:ATP binding"/>
    <property type="evidence" value="ECO:0007669"/>
    <property type="project" value="UniProtKB-UniRule"/>
</dbReference>
<dbReference type="GO" id="GO:0008764">
    <property type="term" value="F:UDP-N-acetylmuramoylalanine-D-glutamate ligase activity"/>
    <property type="evidence" value="ECO:0007669"/>
    <property type="project" value="UniProtKB-UniRule"/>
</dbReference>
<dbReference type="GO" id="GO:0051301">
    <property type="term" value="P:cell division"/>
    <property type="evidence" value="ECO:0007669"/>
    <property type="project" value="UniProtKB-KW"/>
</dbReference>
<dbReference type="GO" id="GO:0071555">
    <property type="term" value="P:cell wall organization"/>
    <property type="evidence" value="ECO:0007669"/>
    <property type="project" value="UniProtKB-KW"/>
</dbReference>
<dbReference type="GO" id="GO:0009252">
    <property type="term" value="P:peptidoglycan biosynthetic process"/>
    <property type="evidence" value="ECO:0007669"/>
    <property type="project" value="UniProtKB-UniRule"/>
</dbReference>
<dbReference type="GO" id="GO:0008360">
    <property type="term" value="P:regulation of cell shape"/>
    <property type="evidence" value="ECO:0007669"/>
    <property type="project" value="UniProtKB-KW"/>
</dbReference>
<dbReference type="Gene3D" id="3.90.190.20">
    <property type="entry name" value="Mur ligase, C-terminal domain"/>
    <property type="match status" value="1"/>
</dbReference>
<dbReference type="Gene3D" id="3.40.1190.10">
    <property type="entry name" value="Mur-like, catalytic domain"/>
    <property type="match status" value="1"/>
</dbReference>
<dbReference type="Gene3D" id="3.40.50.720">
    <property type="entry name" value="NAD(P)-binding Rossmann-like Domain"/>
    <property type="match status" value="1"/>
</dbReference>
<dbReference type="HAMAP" id="MF_00639">
    <property type="entry name" value="MurD"/>
    <property type="match status" value="1"/>
</dbReference>
<dbReference type="InterPro" id="IPR036565">
    <property type="entry name" value="Mur-like_cat_sf"/>
</dbReference>
<dbReference type="InterPro" id="IPR004101">
    <property type="entry name" value="Mur_ligase_C"/>
</dbReference>
<dbReference type="InterPro" id="IPR036615">
    <property type="entry name" value="Mur_ligase_C_dom_sf"/>
</dbReference>
<dbReference type="InterPro" id="IPR013221">
    <property type="entry name" value="Mur_ligase_cen"/>
</dbReference>
<dbReference type="InterPro" id="IPR005762">
    <property type="entry name" value="MurD"/>
</dbReference>
<dbReference type="NCBIfam" id="TIGR01087">
    <property type="entry name" value="murD"/>
    <property type="match status" value="1"/>
</dbReference>
<dbReference type="PANTHER" id="PTHR43692">
    <property type="entry name" value="UDP-N-ACETYLMURAMOYLALANINE--D-GLUTAMATE LIGASE"/>
    <property type="match status" value="1"/>
</dbReference>
<dbReference type="PANTHER" id="PTHR43692:SF1">
    <property type="entry name" value="UDP-N-ACETYLMURAMOYLALANINE--D-GLUTAMATE LIGASE"/>
    <property type="match status" value="1"/>
</dbReference>
<dbReference type="Pfam" id="PF02875">
    <property type="entry name" value="Mur_ligase_C"/>
    <property type="match status" value="1"/>
</dbReference>
<dbReference type="Pfam" id="PF08245">
    <property type="entry name" value="Mur_ligase_M"/>
    <property type="match status" value="1"/>
</dbReference>
<dbReference type="Pfam" id="PF21799">
    <property type="entry name" value="MurD-like_N"/>
    <property type="match status" value="1"/>
</dbReference>
<dbReference type="SUPFAM" id="SSF51984">
    <property type="entry name" value="MurCD N-terminal domain"/>
    <property type="match status" value="1"/>
</dbReference>
<dbReference type="SUPFAM" id="SSF53623">
    <property type="entry name" value="MurD-like peptide ligases, catalytic domain"/>
    <property type="match status" value="1"/>
</dbReference>
<dbReference type="SUPFAM" id="SSF53244">
    <property type="entry name" value="MurD-like peptide ligases, peptide-binding domain"/>
    <property type="match status" value="1"/>
</dbReference>
<keyword id="KW-0067">ATP-binding</keyword>
<keyword id="KW-0131">Cell cycle</keyword>
<keyword id="KW-0132">Cell division</keyword>
<keyword id="KW-0133">Cell shape</keyword>
<keyword id="KW-0961">Cell wall biogenesis/degradation</keyword>
<keyword id="KW-0963">Cytoplasm</keyword>
<keyword id="KW-0436">Ligase</keyword>
<keyword id="KW-0547">Nucleotide-binding</keyword>
<keyword id="KW-0573">Peptidoglycan synthesis</keyword>
<keyword id="KW-1185">Reference proteome</keyword>
<name>MURD_METFK</name>
<feature type="chain" id="PRO_0000257203" description="UDP-N-acetylmuramoylalanine--D-glutamate ligase">
    <location>
        <begin position="1"/>
        <end position="453"/>
    </location>
</feature>
<feature type="binding site" evidence="1">
    <location>
        <begin position="117"/>
        <end position="123"/>
    </location>
    <ligand>
        <name>ATP</name>
        <dbReference type="ChEBI" id="CHEBI:30616"/>
    </ligand>
</feature>
<protein>
    <recommendedName>
        <fullName evidence="1">UDP-N-acetylmuramoylalanine--D-glutamate ligase</fullName>
        <ecNumber evidence="1">6.3.2.9</ecNumber>
    </recommendedName>
    <alternativeName>
        <fullName evidence="1">D-glutamic acid-adding enzyme</fullName>
    </alternativeName>
    <alternativeName>
        <fullName evidence="1">UDP-N-acetylmuramoyl-L-alanyl-D-glutamate synthetase</fullName>
    </alternativeName>
</protein>
<comment type="function">
    <text evidence="1">Cell wall formation. Catalyzes the addition of glutamate to the nucleotide precursor UDP-N-acetylmuramoyl-L-alanine (UMA).</text>
</comment>
<comment type="catalytic activity">
    <reaction evidence="1">
        <text>UDP-N-acetyl-alpha-D-muramoyl-L-alanine + D-glutamate + ATP = UDP-N-acetyl-alpha-D-muramoyl-L-alanyl-D-glutamate + ADP + phosphate + H(+)</text>
        <dbReference type="Rhea" id="RHEA:16429"/>
        <dbReference type="ChEBI" id="CHEBI:15378"/>
        <dbReference type="ChEBI" id="CHEBI:29986"/>
        <dbReference type="ChEBI" id="CHEBI:30616"/>
        <dbReference type="ChEBI" id="CHEBI:43474"/>
        <dbReference type="ChEBI" id="CHEBI:83898"/>
        <dbReference type="ChEBI" id="CHEBI:83900"/>
        <dbReference type="ChEBI" id="CHEBI:456216"/>
        <dbReference type="EC" id="6.3.2.9"/>
    </reaction>
</comment>
<comment type="pathway">
    <text evidence="1">Cell wall biogenesis; peptidoglycan biosynthesis.</text>
</comment>
<comment type="subcellular location">
    <subcellularLocation>
        <location evidence="1">Cytoplasm</location>
    </subcellularLocation>
</comment>
<comment type="similarity">
    <text evidence="1">Belongs to the MurCDEF family.</text>
</comment>